<comment type="similarity">
    <text evidence="1">Belongs to the PHF5 family.</text>
</comment>
<gene>
    <name type="ordered locus">At2g30000</name>
    <name type="ORF">F23F1.8</name>
</gene>
<evidence type="ECO:0000305" key="1"/>
<organism>
    <name type="scientific">Arabidopsis thaliana</name>
    <name type="common">Mouse-ear cress</name>
    <dbReference type="NCBI Taxonomy" id="3702"/>
    <lineage>
        <taxon>Eukaryota</taxon>
        <taxon>Viridiplantae</taxon>
        <taxon>Streptophyta</taxon>
        <taxon>Embryophyta</taxon>
        <taxon>Tracheophyta</taxon>
        <taxon>Spermatophyta</taxon>
        <taxon>Magnoliopsida</taxon>
        <taxon>eudicotyledons</taxon>
        <taxon>Gunneridae</taxon>
        <taxon>Pentapetalae</taxon>
        <taxon>rosids</taxon>
        <taxon>malvids</taxon>
        <taxon>Brassicales</taxon>
        <taxon>Brassicaceae</taxon>
        <taxon>Camelineae</taxon>
        <taxon>Arabidopsis</taxon>
    </lineage>
</organism>
<name>PHF5A_ARATH</name>
<proteinExistence type="inferred from homology"/>
<sequence length="110" mass="12429">MAKHHPDLIMCRKQPGIAIGRLCEKCDGKCVICDSYVRPCTLVRICDECNYGSFQGRCVICGGVGISDAYYCKECTQQEKDRDGCPKIVNLGSAKTDLFYERKKYGFKKR</sequence>
<feature type="chain" id="PRO_0000417452" description="PHD finger-like domain-containing protein 5A">
    <location>
        <begin position="1"/>
        <end position="110"/>
    </location>
</feature>
<accession>P0DI19</accession>
<accession>O80873</accession>
<dbReference type="EMBL" id="AC004680">
    <property type="protein sequence ID" value="AAC31852.1"/>
    <property type="molecule type" value="Genomic_DNA"/>
</dbReference>
<dbReference type="EMBL" id="CP002685">
    <property type="protein sequence ID" value="AEC08334.1"/>
    <property type="molecule type" value="Genomic_DNA"/>
</dbReference>
<dbReference type="EMBL" id="AK118482">
    <property type="protein sequence ID" value="BAC43086.1"/>
    <property type="molecule type" value="mRNA"/>
</dbReference>
<dbReference type="EMBL" id="BT004694">
    <property type="protein sequence ID" value="AAO42940.1"/>
    <property type="molecule type" value="mRNA"/>
</dbReference>
<dbReference type="EMBL" id="AY087478">
    <property type="protein sequence ID" value="AAM65022.1"/>
    <property type="molecule type" value="mRNA"/>
</dbReference>
<dbReference type="PIR" id="T02485">
    <property type="entry name" value="T02485"/>
</dbReference>
<dbReference type="RefSeq" id="NP_001077473.1">
    <property type="nucleotide sequence ID" value="NM_001084004.1"/>
</dbReference>
<dbReference type="RefSeq" id="NP_001184928.1">
    <property type="nucleotide sequence ID" value="NM_001197999.1"/>
</dbReference>
<dbReference type="RefSeq" id="NP_001318938.1">
    <property type="nucleotide sequence ID" value="NM_001331682.1"/>
</dbReference>
<dbReference type="RefSeq" id="NP_001321285.1">
    <property type="nucleotide sequence ID" value="NM_001331684.1"/>
</dbReference>
<dbReference type="RefSeq" id="NP_001321286.1">
    <property type="nucleotide sequence ID" value="NM_001331683.1"/>
</dbReference>
<dbReference type="RefSeq" id="NP_563782.1">
    <property type="nucleotide sequence ID" value="NM_100591.4"/>
</dbReference>
<dbReference type="RefSeq" id="NP_565691.1">
    <property type="nucleotide sequence ID" value="NM_128555.4"/>
</dbReference>
<dbReference type="SMR" id="P0DI19"/>
<dbReference type="BioGRID" id="22469">
    <property type="interactions" value="5"/>
</dbReference>
<dbReference type="BioGRID" id="2901">
    <property type="interactions" value="5"/>
</dbReference>
<dbReference type="FunCoup" id="P0DI19">
    <property type="interactions" value="3479"/>
</dbReference>
<dbReference type="STRING" id="3702.P0DI19"/>
<dbReference type="PaxDb" id="3702-AT1G07170.3"/>
<dbReference type="EnsemblPlants" id="AT1G07170.1">
    <property type="protein sequence ID" value="AT1G07170.1"/>
    <property type="gene ID" value="AT1G07170"/>
</dbReference>
<dbReference type="EnsemblPlants" id="AT1G07170.2">
    <property type="protein sequence ID" value="AT1G07170.2"/>
    <property type="gene ID" value="AT1G07170"/>
</dbReference>
<dbReference type="EnsemblPlants" id="AT1G07170.3">
    <property type="protein sequence ID" value="AT1G07170.3"/>
    <property type="gene ID" value="AT1G07170"/>
</dbReference>
<dbReference type="EnsemblPlants" id="AT1G07170.4">
    <property type="protein sequence ID" value="AT1G07170.4"/>
    <property type="gene ID" value="AT1G07170"/>
</dbReference>
<dbReference type="EnsemblPlants" id="AT1G07170.5">
    <property type="protein sequence ID" value="AT1G07170.5"/>
    <property type="gene ID" value="AT1G07170"/>
</dbReference>
<dbReference type="EnsemblPlants" id="AT1G07170.6">
    <property type="protein sequence ID" value="AT1G07170.6"/>
    <property type="gene ID" value="AT1G07170"/>
</dbReference>
<dbReference type="EnsemblPlants" id="AT2G30000.1">
    <property type="protein sequence ID" value="AT2G30000.1"/>
    <property type="gene ID" value="AT2G30000"/>
</dbReference>
<dbReference type="GeneID" id="817551"/>
<dbReference type="Gramene" id="AT1G07170.1">
    <property type="protein sequence ID" value="AT1G07170.1"/>
    <property type="gene ID" value="AT1G07170"/>
</dbReference>
<dbReference type="Gramene" id="AT1G07170.2">
    <property type="protein sequence ID" value="AT1G07170.2"/>
    <property type="gene ID" value="AT1G07170"/>
</dbReference>
<dbReference type="Gramene" id="AT1G07170.3">
    <property type="protein sequence ID" value="AT1G07170.3"/>
    <property type="gene ID" value="AT1G07170"/>
</dbReference>
<dbReference type="Gramene" id="AT1G07170.4">
    <property type="protein sequence ID" value="AT1G07170.4"/>
    <property type="gene ID" value="AT1G07170"/>
</dbReference>
<dbReference type="Gramene" id="AT1G07170.5">
    <property type="protein sequence ID" value="AT1G07170.5"/>
    <property type="gene ID" value="AT1G07170"/>
</dbReference>
<dbReference type="Gramene" id="AT1G07170.6">
    <property type="protein sequence ID" value="AT1G07170.6"/>
    <property type="gene ID" value="AT1G07170"/>
</dbReference>
<dbReference type="Gramene" id="AT2G30000.1">
    <property type="protein sequence ID" value="AT2G30000.1"/>
    <property type="gene ID" value="AT2G30000"/>
</dbReference>
<dbReference type="KEGG" id="ath:AT1G07170"/>
<dbReference type="KEGG" id="ath:AT2G30000"/>
<dbReference type="Araport" id="AT2G30000"/>
<dbReference type="TAIR" id="AT2G30000"/>
<dbReference type="eggNOG" id="KOG1705">
    <property type="taxonomic scope" value="Eukaryota"/>
</dbReference>
<dbReference type="HOGENOM" id="CLU_110369_2_0_1"/>
<dbReference type="InParanoid" id="P0DI19"/>
<dbReference type="OMA" id="AYYCWEC"/>
<dbReference type="OrthoDB" id="10248186at2759"/>
<dbReference type="PhylomeDB" id="P0DI19"/>
<dbReference type="PRO" id="PR:P0DI19"/>
<dbReference type="Proteomes" id="UP000006548">
    <property type="component" value="Chromosome 2"/>
</dbReference>
<dbReference type="ExpressionAtlas" id="P0DI19">
    <property type="expression patterns" value="baseline and differential"/>
</dbReference>
<dbReference type="GO" id="GO:0000398">
    <property type="term" value="P:mRNA splicing, via spliceosome"/>
    <property type="evidence" value="ECO:0007669"/>
    <property type="project" value="InterPro"/>
</dbReference>
<dbReference type="InterPro" id="IPR005345">
    <property type="entry name" value="PHF5"/>
</dbReference>
<dbReference type="PANTHER" id="PTHR13120">
    <property type="entry name" value="PHD FINGER-LIKE DOMAIN-CONTAINING PROTEIN 5A"/>
    <property type="match status" value="1"/>
</dbReference>
<dbReference type="Pfam" id="PF03660">
    <property type="entry name" value="PHF5"/>
    <property type="match status" value="1"/>
</dbReference>
<dbReference type="PIRSF" id="PIRSF016468">
    <property type="entry name" value="PHF5"/>
    <property type="match status" value="1"/>
</dbReference>
<reference key="1">
    <citation type="journal article" date="1999" name="Nature">
        <title>Sequence and analysis of chromosome 2 of the plant Arabidopsis thaliana.</title>
        <authorList>
            <person name="Lin X."/>
            <person name="Kaul S."/>
            <person name="Rounsley S.D."/>
            <person name="Shea T.P."/>
            <person name="Benito M.-I."/>
            <person name="Town C.D."/>
            <person name="Fujii C.Y."/>
            <person name="Mason T.M."/>
            <person name="Bowman C.L."/>
            <person name="Barnstead M.E."/>
            <person name="Feldblyum T.V."/>
            <person name="Buell C.R."/>
            <person name="Ketchum K.A."/>
            <person name="Lee J.J."/>
            <person name="Ronning C.M."/>
            <person name="Koo H.L."/>
            <person name="Moffat K.S."/>
            <person name="Cronin L.A."/>
            <person name="Shen M."/>
            <person name="Pai G."/>
            <person name="Van Aken S."/>
            <person name="Umayam L."/>
            <person name="Tallon L.J."/>
            <person name="Gill J.E."/>
            <person name="Adams M.D."/>
            <person name="Carrera A.J."/>
            <person name="Creasy T.H."/>
            <person name="Goodman H.M."/>
            <person name="Somerville C.R."/>
            <person name="Copenhaver G.P."/>
            <person name="Preuss D."/>
            <person name="Nierman W.C."/>
            <person name="White O."/>
            <person name="Eisen J.A."/>
            <person name="Salzberg S.L."/>
            <person name="Fraser C.M."/>
            <person name="Venter J.C."/>
        </authorList>
    </citation>
    <scope>NUCLEOTIDE SEQUENCE [LARGE SCALE GENOMIC DNA]</scope>
    <source>
        <strain>cv. Columbia</strain>
    </source>
</reference>
<reference key="2">
    <citation type="journal article" date="2017" name="Plant J.">
        <title>Araport11: a complete reannotation of the Arabidopsis thaliana reference genome.</title>
        <authorList>
            <person name="Cheng C.Y."/>
            <person name="Krishnakumar V."/>
            <person name="Chan A.P."/>
            <person name="Thibaud-Nissen F."/>
            <person name="Schobel S."/>
            <person name="Town C.D."/>
        </authorList>
    </citation>
    <scope>GENOME REANNOTATION</scope>
    <source>
        <strain>cv. Columbia</strain>
    </source>
</reference>
<reference key="3">
    <citation type="journal article" date="2002" name="Science">
        <title>Functional annotation of a full-length Arabidopsis cDNA collection.</title>
        <authorList>
            <person name="Seki M."/>
            <person name="Narusaka M."/>
            <person name="Kamiya A."/>
            <person name="Ishida J."/>
            <person name="Satou M."/>
            <person name="Sakurai T."/>
            <person name="Nakajima M."/>
            <person name="Enju A."/>
            <person name="Akiyama K."/>
            <person name="Oono Y."/>
            <person name="Muramatsu M."/>
            <person name="Hayashizaki Y."/>
            <person name="Kawai J."/>
            <person name="Carninci P."/>
            <person name="Itoh M."/>
            <person name="Ishii Y."/>
            <person name="Arakawa T."/>
            <person name="Shibata K."/>
            <person name="Shinagawa A."/>
            <person name="Shinozaki K."/>
        </authorList>
    </citation>
    <scope>NUCLEOTIDE SEQUENCE [LARGE SCALE MRNA]</scope>
    <source>
        <strain>cv. Columbia</strain>
    </source>
</reference>
<reference key="4">
    <citation type="journal article" date="2003" name="Science">
        <title>Empirical analysis of transcriptional activity in the Arabidopsis genome.</title>
        <authorList>
            <person name="Yamada K."/>
            <person name="Lim J."/>
            <person name="Dale J.M."/>
            <person name="Chen H."/>
            <person name="Shinn P."/>
            <person name="Palm C.J."/>
            <person name="Southwick A.M."/>
            <person name="Wu H.C."/>
            <person name="Kim C.J."/>
            <person name="Nguyen M."/>
            <person name="Pham P.K."/>
            <person name="Cheuk R.F."/>
            <person name="Karlin-Newmann G."/>
            <person name="Liu S.X."/>
            <person name="Lam B."/>
            <person name="Sakano H."/>
            <person name="Wu T."/>
            <person name="Yu G."/>
            <person name="Miranda M."/>
            <person name="Quach H.L."/>
            <person name="Tripp M."/>
            <person name="Chang C.H."/>
            <person name="Lee J.M."/>
            <person name="Toriumi M.J."/>
            <person name="Chan M.M."/>
            <person name="Tang C.C."/>
            <person name="Onodera C.S."/>
            <person name="Deng J.M."/>
            <person name="Akiyama K."/>
            <person name="Ansari Y."/>
            <person name="Arakawa T."/>
            <person name="Banh J."/>
            <person name="Banno F."/>
            <person name="Bowser L."/>
            <person name="Brooks S.Y."/>
            <person name="Carninci P."/>
            <person name="Chao Q."/>
            <person name="Choy N."/>
            <person name="Enju A."/>
            <person name="Goldsmith A.D."/>
            <person name="Gurjal M."/>
            <person name="Hansen N.F."/>
            <person name="Hayashizaki Y."/>
            <person name="Johnson-Hopson C."/>
            <person name="Hsuan V.W."/>
            <person name="Iida K."/>
            <person name="Karnes M."/>
            <person name="Khan S."/>
            <person name="Koesema E."/>
            <person name="Ishida J."/>
            <person name="Jiang P.X."/>
            <person name="Jones T."/>
            <person name="Kawai J."/>
            <person name="Kamiya A."/>
            <person name="Meyers C."/>
            <person name="Nakajima M."/>
            <person name="Narusaka M."/>
            <person name="Seki M."/>
            <person name="Sakurai T."/>
            <person name="Satou M."/>
            <person name="Tamse R."/>
            <person name="Vaysberg M."/>
            <person name="Wallender E.K."/>
            <person name="Wong C."/>
            <person name="Yamamura Y."/>
            <person name="Yuan S."/>
            <person name="Shinozaki K."/>
            <person name="Davis R.W."/>
            <person name="Theologis A."/>
            <person name="Ecker J.R."/>
        </authorList>
    </citation>
    <scope>NUCLEOTIDE SEQUENCE [LARGE SCALE MRNA]</scope>
    <source>
        <strain>cv. Columbia</strain>
    </source>
</reference>
<reference key="5">
    <citation type="submission" date="2002-03" db="EMBL/GenBank/DDBJ databases">
        <title>Full-length cDNA from Arabidopsis thaliana.</title>
        <authorList>
            <person name="Brover V.V."/>
            <person name="Troukhan M.E."/>
            <person name="Alexandrov N.A."/>
            <person name="Lu Y.-P."/>
            <person name="Flavell R.B."/>
            <person name="Feldmann K.A."/>
        </authorList>
    </citation>
    <scope>NUCLEOTIDE SEQUENCE [LARGE SCALE MRNA]</scope>
</reference>
<protein>
    <recommendedName>
        <fullName>PHD finger-like domain-containing protein 5A</fullName>
    </recommendedName>
</protein>
<keyword id="KW-1185">Reference proteome</keyword>